<accession>A2CBQ9</accession>
<evidence type="ECO:0000255" key="1">
    <source>
        <dbReference type="HAMAP-Rule" id="MF_01344"/>
    </source>
</evidence>
<organism>
    <name type="scientific">Prochlorococcus marinus (strain MIT 9303)</name>
    <dbReference type="NCBI Taxonomy" id="59922"/>
    <lineage>
        <taxon>Bacteria</taxon>
        <taxon>Bacillati</taxon>
        <taxon>Cyanobacteriota</taxon>
        <taxon>Cyanophyceae</taxon>
        <taxon>Synechococcales</taxon>
        <taxon>Prochlorococcaceae</taxon>
        <taxon>Prochlorococcus</taxon>
    </lineage>
</organism>
<protein>
    <recommendedName>
        <fullName evidence="1">Cytochrome b6-f complex subunit 4</fullName>
    </recommendedName>
    <alternativeName>
        <fullName evidence="1">17 kDa polypeptide</fullName>
    </alternativeName>
</protein>
<dbReference type="EMBL" id="CP000554">
    <property type="protein sequence ID" value="ABM78919.1"/>
    <property type="molecule type" value="Genomic_DNA"/>
</dbReference>
<dbReference type="RefSeq" id="WP_011826790.1">
    <property type="nucleotide sequence ID" value="NC_008820.1"/>
</dbReference>
<dbReference type="SMR" id="A2CBQ9"/>
<dbReference type="STRING" id="59922.P9303_21841"/>
<dbReference type="KEGG" id="pmf:P9303_21841"/>
<dbReference type="HOGENOM" id="CLU_112652_0_0_3"/>
<dbReference type="BioCyc" id="PMAR59922:G1G80-1912-MONOMER"/>
<dbReference type="Proteomes" id="UP000002274">
    <property type="component" value="Chromosome"/>
</dbReference>
<dbReference type="GO" id="GO:0031676">
    <property type="term" value="C:plasma membrane-derived thylakoid membrane"/>
    <property type="evidence" value="ECO:0007669"/>
    <property type="project" value="UniProtKB-SubCell"/>
</dbReference>
<dbReference type="GO" id="GO:0045158">
    <property type="term" value="F:electron transporter, transferring electrons within cytochrome b6/f complex of photosystem II activity"/>
    <property type="evidence" value="ECO:0007669"/>
    <property type="project" value="UniProtKB-UniRule"/>
</dbReference>
<dbReference type="GO" id="GO:0045156">
    <property type="term" value="F:electron transporter, transferring electrons within the cyclic electron transport pathway of photosynthesis activity"/>
    <property type="evidence" value="ECO:0007669"/>
    <property type="project" value="InterPro"/>
</dbReference>
<dbReference type="GO" id="GO:0008121">
    <property type="term" value="F:ubiquinol-cytochrome-c reductase activity"/>
    <property type="evidence" value="ECO:0007669"/>
    <property type="project" value="TreeGrafter"/>
</dbReference>
<dbReference type="GO" id="GO:0009767">
    <property type="term" value="P:photosynthetic electron transport chain"/>
    <property type="evidence" value="ECO:0007669"/>
    <property type="project" value="InterPro"/>
</dbReference>
<dbReference type="CDD" id="cd00290">
    <property type="entry name" value="cytochrome_b_C"/>
    <property type="match status" value="1"/>
</dbReference>
<dbReference type="FunFam" id="1.10.287.980:FF:000001">
    <property type="entry name" value="Cytochrome b6-f complex subunit 4"/>
    <property type="match status" value="1"/>
</dbReference>
<dbReference type="FunFam" id="1.20.5.510:FF:000002">
    <property type="entry name" value="Cytochrome b6-f complex subunit 4"/>
    <property type="match status" value="1"/>
</dbReference>
<dbReference type="Gene3D" id="1.10.287.980">
    <property type="entry name" value="plastocyanin oxidoreductase"/>
    <property type="match status" value="1"/>
</dbReference>
<dbReference type="Gene3D" id="1.20.5.510">
    <property type="entry name" value="Single helix bin"/>
    <property type="match status" value="1"/>
</dbReference>
<dbReference type="HAMAP" id="MF_01344">
    <property type="entry name" value="Cytb6_f_subIV"/>
    <property type="match status" value="1"/>
</dbReference>
<dbReference type="InterPro" id="IPR005798">
    <property type="entry name" value="Cyt_b/b6_C"/>
</dbReference>
<dbReference type="InterPro" id="IPR036150">
    <property type="entry name" value="Cyt_b/b6_C_sf"/>
</dbReference>
<dbReference type="InterPro" id="IPR005870">
    <property type="entry name" value="Cyt_b6/f_cplx_suIV"/>
</dbReference>
<dbReference type="InterPro" id="IPR048260">
    <property type="entry name" value="Cytochrome_b_C_euk/bac"/>
</dbReference>
<dbReference type="NCBIfam" id="TIGR01156">
    <property type="entry name" value="cytb6_f_IV"/>
    <property type="match status" value="1"/>
</dbReference>
<dbReference type="PANTHER" id="PTHR19271">
    <property type="entry name" value="CYTOCHROME B"/>
    <property type="match status" value="1"/>
</dbReference>
<dbReference type="PANTHER" id="PTHR19271:SF41">
    <property type="entry name" value="CYTOCHROME B_B6 C-TERMINAL REGION PROFILE DOMAIN-CONTAINING PROTEIN"/>
    <property type="match status" value="1"/>
</dbReference>
<dbReference type="Pfam" id="PF00032">
    <property type="entry name" value="Cytochrom_B_C"/>
    <property type="match status" value="1"/>
</dbReference>
<dbReference type="PIRSF" id="PIRSF000033">
    <property type="entry name" value="B6f_17K"/>
    <property type="match status" value="1"/>
</dbReference>
<dbReference type="SUPFAM" id="SSF81648">
    <property type="entry name" value="a domain/subunit of cytochrome bc1 complex (Ubiquinol-cytochrome c reductase)"/>
    <property type="match status" value="1"/>
</dbReference>
<dbReference type="PROSITE" id="PS51003">
    <property type="entry name" value="CYTB_CTER"/>
    <property type="match status" value="1"/>
</dbReference>
<comment type="function">
    <text evidence="1">Component of the cytochrome b6-f complex, which mediates electron transfer between photosystem II (PSII) and photosystem I (PSI), cyclic electron flow around PSI, and state transitions.</text>
</comment>
<comment type="subunit">
    <text evidence="1">The 4 large subunits of the cytochrome b6-f complex are cytochrome b6, subunit IV (17 kDa polypeptide, PetD), cytochrome f and the Rieske protein, while the 4 small subunits are PetG, PetL, PetM and PetN. The complex functions as a dimer.</text>
</comment>
<comment type="subcellular location">
    <subcellularLocation>
        <location evidence="1">Cellular thylakoid membrane</location>
        <topology evidence="1">Multi-pass membrane protein</topology>
    </subcellularLocation>
</comment>
<comment type="similarity">
    <text evidence="1">Belongs to the cytochrome b family. PetD subfamily.</text>
</comment>
<name>PETD_PROM3</name>
<proteinExistence type="inferred from homology"/>
<reference key="1">
    <citation type="journal article" date="2007" name="PLoS Genet.">
        <title>Patterns and implications of gene gain and loss in the evolution of Prochlorococcus.</title>
        <authorList>
            <person name="Kettler G.C."/>
            <person name="Martiny A.C."/>
            <person name="Huang K."/>
            <person name="Zucker J."/>
            <person name="Coleman M.L."/>
            <person name="Rodrigue S."/>
            <person name="Chen F."/>
            <person name="Lapidus A."/>
            <person name="Ferriera S."/>
            <person name="Johnson J."/>
            <person name="Steglich C."/>
            <person name="Church G.M."/>
            <person name="Richardson P."/>
            <person name="Chisholm S.W."/>
        </authorList>
    </citation>
    <scope>NUCLEOTIDE SEQUENCE [LARGE SCALE GENOMIC DNA]</scope>
    <source>
        <strain>MIT 9303</strain>
    </source>
</reference>
<keyword id="KW-0249">Electron transport</keyword>
<keyword id="KW-0472">Membrane</keyword>
<keyword id="KW-0602">Photosynthesis</keyword>
<keyword id="KW-0793">Thylakoid</keyword>
<keyword id="KW-0812">Transmembrane</keyword>
<keyword id="KW-1133">Transmembrane helix</keyword>
<keyword id="KW-0813">Transport</keyword>
<gene>
    <name evidence="1" type="primary">petD</name>
    <name type="ordered locus">P9303_21841</name>
</gene>
<feature type="chain" id="PRO_1000054899" description="Cytochrome b6-f complex subunit 4">
    <location>
        <begin position="1"/>
        <end position="160"/>
    </location>
</feature>
<feature type="transmembrane region" description="Helical" evidence="1">
    <location>
        <begin position="36"/>
        <end position="56"/>
    </location>
</feature>
<feature type="transmembrane region" description="Helical" evidence="1">
    <location>
        <begin position="95"/>
        <end position="115"/>
    </location>
</feature>
<feature type="transmembrane region" description="Helical" evidence="1">
    <location>
        <begin position="128"/>
        <end position="148"/>
    </location>
</feature>
<sequence>MHILKKPDFSDPKLRAKLAKGMGHNYYGEPAWPNDLLYIFPVVILGTFACLVGLAVLDPAMLGDKADPFATPLEILPEWYLYPVFQILRVVPNKLLGIVLQTLVPLGLMLIPFIENVNKYQNPFRRPIAMAFFLFGTMITIYLGIGACLPIDKSLTLGLF</sequence>